<reference key="1">
    <citation type="journal article" date="2000" name="Nature">
        <title>Sequence and analysis of chromosome 5 of the plant Arabidopsis thaliana.</title>
        <authorList>
            <person name="Tabata S."/>
            <person name="Kaneko T."/>
            <person name="Nakamura Y."/>
            <person name="Kotani H."/>
            <person name="Kato T."/>
            <person name="Asamizu E."/>
            <person name="Miyajima N."/>
            <person name="Sasamoto S."/>
            <person name="Kimura T."/>
            <person name="Hosouchi T."/>
            <person name="Kawashima K."/>
            <person name="Kohara M."/>
            <person name="Matsumoto M."/>
            <person name="Matsuno A."/>
            <person name="Muraki A."/>
            <person name="Nakayama S."/>
            <person name="Nakazaki N."/>
            <person name="Naruo K."/>
            <person name="Okumura S."/>
            <person name="Shinpo S."/>
            <person name="Takeuchi C."/>
            <person name="Wada T."/>
            <person name="Watanabe A."/>
            <person name="Yamada M."/>
            <person name="Yasuda M."/>
            <person name="Sato S."/>
            <person name="de la Bastide M."/>
            <person name="Huang E."/>
            <person name="Spiegel L."/>
            <person name="Gnoj L."/>
            <person name="O'Shaughnessy A."/>
            <person name="Preston R."/>
            <person name="Habermann K."/>
            <person name="Murray J."/>
            <person name="Johnson D."/>
            <person name="Rohlfing T."/>
            <person name="Nelson J."/>
            <person name="Stoneking T."/>
            <person name="Pepin K."/>
            <person name="Spieth J."/>
            <person name="Sekhon M."/>
            <person name="Armstrong J."/>
            <person name="Becker M."/>
            <person name="Belter E."/>
            <person name="Cordum H."/>
            <person name="Cordes M."/>
            <person name="Courtney L."/>
            <person name="Courtney W."/>
            <person name="Dante M."/>
            <person name="Du H."/>
            <person name="Edwards J."/>
            <person name="Fryman J."/>
            <person name="Haakensen B."/>
            <person name="Lamar E."/>
            <person name="Latreille P."/>
            <person name="Leonard S."/>
            <person name="Meyer R."/>
            <person name="Mulvaney E."/>
            <person name="Ozersky P."/>
            <person name="Riley A."/>
            <person name="Strowmatt C."/>
            <person name="Wagner-McPherson C."/>
            <person name="Wollam A."/>
            <person name="Yoakum M."/>
            <person name="Bell M."/>
            <person name="Dedhia N."/>
            <person name="Parnell L."/>
            <person name="Shah R."/>
            <person name="Rodriguez M."/>
            <person name="Hoon See L."/>
            <person name="Vil D."/>
            <person name="Baker J."/>
            <person name="Kirchoff K."/>
            <person name="Toth K."/>
            <person name="King L."/>
            <person name="Bahret A."/>
            <person name="Miller B."/>
            <person name="Marra M.A."/>
            <person name="Martienssen R."/>
            <person name="McCombie W.R."/>
            <person name="Wilson R.K."/>
            <person name="Murphy G."/>
            <person name="Bancroft I."/>
            <person name="Volckaert G."/>
            <person name="Wambutt R."/>
            <person name="Duesterhoeft A."/>
            <person name="Stiekema W."/>
            <person name="Pohl T."/>
            <person name="Entian K.-D."/>
            <person name="Terryn N."/>
            <person name="Hartley N."/>
            <person name="Bent E."/>
            <person name="Johnson S."/>
            <person name="Langham S.-A."/>
            <person name="McCullagh B."/>
            <person name="Robben J."/>
            <person name="Grymonprez B."/>
            <person name="Zimmermann W."/>
            <person name="Ramsperger U."/>
            <person name="Wedler H."/>
            <person name="Balke K."/>
            <person name="Wedler E."/>
            <person name="Peters S."/>
            <person name="van Staveren M."/>
            <person name="Dirkse W."/>
            <person name="Mooijman P."/>
            <person name="Klein Lankhorst R."/>
            <person name="Weitzenegger T."/>
            <person name="Bothe G."/>
            <person name="Rose M."/>
            <person name="Hauf J."/>
            <person name="Berneiser S."/>
            <person name="Hempel S."/>
            <person name="Feldpausch M."/>
            <person name="Lamberth S."/>
            <person name="Villarroel R."/>
            <person name="Gielen J."/>
            <person name="Ardiles W."/>
            <person name="Bents O."/>
            <person name="Lemcke K."/>
            <person name="Kolesov G."/>
            <person name="Mayer K.F.X."/>
            <person name="Rudd S."/>
            <person name="Schoof H."/>
            <person name="Schueller C."/>
            <person name="Zaccaria P."/>
            <person name="Mewes H.-W."/>
            <person name="Bevan M."/>
            <person name="Fransz P.F."/>
        </authorList>
    </citation>
    <scope>NUCLEOTIDE SEQUENCE [LARGE SCALE GENOMIC DNA]</scope>
    <source>
        <strain>cv. Columbia</strain>
    </source>
</reference>
<reference key="2">
    <citation type="journal article" date="2017" name="Plant J.">
        <title>Araport11: a complete reannotation of the Arabidopsis thaliana reference genome.</title>
        <authorList>
            <person name="Cheng C.Y."/>
            <person name="Krishnakumar V."/>
            <person name="Chan A.P."/>
            <person name="Thibaud-Nissen F."/>
            <person name="Schobel S."/>
            <person name="Town C.D."/>
        </authorList>
    </citation>
    <scope>GENOME REANNOTATION</scope>
    <source>
        <strain>cv. Columbia</strain>
    </source>
</reference>
<reference key="3">
    <citation type="journal article" date="2004" name="Plant Cell">
        <title>Genome-wide analysis of Arabidopsis pentatricopeptide repeat proteins reveals their essential role in organelle biogenesis.</title>
        <authorList>
            <person name="Lurin C."/>
            <person name="Andres C."/>
            <person name="Aubourg S."/>
            <person name="Bellaoui M."/>
            <person name="Bitton F."/>
            <person name="Bruyere C."/>
            <person name="Caboche M."/>
            <person name="Debast C."/>
            <person name="Gualberto J."/>
            <person name="Hoffmann B."/>
            <person name="Lecharny A."/>
            <person name="Le Ret M."/>
            <person name="Martin-Magniette M.-L."/>
            <person name="Mireau H."/>
            <person name="Peeters N."/>
            <person name="Renou J.-P."/>
            <person name="Szurek B."/>
            <person name="Taconnat L."/>
            <person name="Small I."/>
        </authorList>
    </citation>
    <scope>GENE FAMILY</scope>
</reference>
<dbReference type="EMBL" id="AL391149">
    <property type="protein sequence ID" value="CAC01881.1"/>
    <property type="molecule type" value="Genomic_DNA"/>
</dbReference>
<dbReference type="EMBL" id="CP002688">
    <property type="protein sequence ID" value="AED92080.1"/>
    <property type="molecule type" value="Genomic_DNA"/>
</dbReference>
<dbReference type="PIR" id="T51427">
    <property type="entry name" value="T51427"/>
</dbReference>
<dbReference type="RefSeq" id="NP_196986.1">
    <property type="nucleotide sequence ID" value="NM_121486.2"/>
</dbReference>
<dbReference type="SMR" id="Q9LEQ7"/>
<dbReference type="PaxDb" id="3702-AT5G14820.1"/>
<dbReference type="ProteomicsDB" id="249007"/>
<dbReference type="EnsemblPlants" id="AT5G14820.1">
    <property type="protein sequence ID" value="AT5G14820.1"/>
    <property type="gene ID" value="AT5G14820"/>
</dbReference>
<dbReference type="GeneID" id="831334"/>
<dbReference type="Gramene" id="AT5G14820.1">
    <property type="protein sequence ID" value="AT5G14820.1"/>
    <property type="gene ID" value="AT5G14820"/>
</dbReference>
<dbReference type="KEGG" id="ath:AT5G14820"/>
<dbReference type="Araport" id="AT5G14820"/>
<dbReference type="TAIR" id="AT5G14820"/>
<dbReference type="eggNOG" id="KOG4197">
    <property type="taxonomic scope" value="Eukaryota"/>
</dbReference>
<dbReference type="HOGENOM" id="CLU_002706_49_20_1"/>
<dbReference type="InParanoid" id="Q9LEQ7"/>
<dbReference type="OMA" id="SHRFFRW"/>
<dbReference type="PhylomeDB" id="Q9LEQ7"/>
<dbReference type="PRO" id="PR:Q9LEQ7"/>
<dbReference type="Proteomes" id="UP000006548">
    <property type="component" value="Chromosome 5"/>
</dbReference>
<dbReference type="GO" id="GO:0005739">
    <property type="term" value="C:mitochondrion"/>
    <property type="evidence" value="ECO:0007669"/>
    <property type="project" value="UniProtKB-SubCell"/>
</dbReference>
<dbReference type="Gene3D" id="1.25.40.10">
    <property type="entry name" value="Tetratricopeptide repeat domain"/>
    <property type="match status" value="3"/>
</dbReference>
<dbReference type="InterPro" id="IPR002885">
    <property type="entry name" value="Pentatricopeptide_rpt"/>
</dbReference>
<dbReference type="InterPro" id="IPR050872">
    <property type="entry name" value="PPR_P_subfamily"/>
</dbReference>
<dbReference type="InterPro" id="IPR033443">
    <property type="entry name" value="PROP1-like_PPR_dom"/>
</dbReference>
<dbReference type="InterPro" id="IPR011990">
    <property type="entry name" value="TPR-like_helical_dom_sf"/>
</dbReference>
<dbReference type="NCBIfam" id="TIGR00756">
    <property type="entry name" value="PPR"/>
    <property type="match status" value="9"/>
</dbReference>
<dbReference type="PANTHER" id="PTHR46128">
    <property type="entry name" value="MITOCHONDRIAL GROUP I INTRON SPLICING FACTOR CCM1"/>
    <property type="match status" value="1"/>
</dbReference>
<dbReference type="PANTHER" id="PTHR46128:SF159">
    <property type="entry name" value="PENTACOTRIPEPTIDE-REPEAT REGION OF PRORP DOMAIN-CONTAINING PROTEIN"/>
    <property type="match status" value="1"/>
</dbReference>
<dbReference type="Pfam" id="PF01535">
    <property type="entry name" value="PPR"/>
    <property type="match status" value="3"/>
</dbReference>
<dbReference type="Pfam" id="PF13041">
    <property type="entry name" value="PPR_2"/>
    <property type="match status" value="1"/>
</dbReference>
<dbReference type="Pfam" id="PF17177">
    <property type="entry name" value="PPR_long"/>
    <property type="match status" value="1"/>
</dbReference>
<dbReference type="SUPFAM" id="SSF81901">
    <property type="entry name" value="HCP-like"/>
    <property type="match status" value="1"/>
</dbReference>
<dbReference type="PROSITE" id="PS51375">
    <property type="entry name" value="PPR"/>
    <property type="match status" value="10"/>
</dbReference>
<organism>
    <name type="scientific">Arabidopsis thaliana</name>
    <name type="common">Mouse-ear cress</name>
    <dbReference type="NCBI Taxonomy" id="3702"/>
    <lineage>
        <taxon>Eukaryota</taxon>
        <taxon>Viridiplantae</taxon>
        <taxon>Streptophyta</taxon>
        <taxon>Embryophyta</taxon>
        <taxon>Tracheophyta</taxon>
        <taxon>Spermatophyta</taxon>
        <taxon>Magnoliopsida</taxon>
        <taxon>eudicotyledons</taxon>
        <taxon>Gunneridae</taxon>
        <taxon>Pentapetalae</taxon>
        <taxon>rosids</taxon>
        <taxon>malvids</taxon>
        <taxon>Brassicales</taxon>
        <taxon>Brassicaceae</taxon>
        <taxon>Camelineae</taxon>
        <taxon>Arabidopsis</taxon>
    </lineage>
</organism>
<accession>Q9LEQ7</accession>
<protein>
    <recommendedName>
        <fullName>Pentatricopeptide repeat-containing protein At5g14820, mitochondrial</fullName>
    </recommendedName>
</protein>
<proteinExistence type="evidence at transcript level"/>
<name>PP382_ARATH</name>
<comment type="subcellular location">
    <subcellularLocation>
        <location evidence="2">Mitochondrion</location>
    </subcellularLocation>
</comment>
<comment type="similarity">
    <text evidence="2">Belongs to the PPR family. P subfamily.</text>
</comment>
<comment type="online information" name="Pentatricopeptide repeat proteins">
    <link uri="https://ppr.plantenergy.uwa.edu.au"/>
</comment>
<evidence type="ECO:0000255" key="1"/>
<evidence type="ECO:0000305" key="2"/>
<keyword id="KW-0496">Mitochondrion</keyword>
<keyword id="KW-1185">Reference proteome</keyword>
<keyword id="KW-0677">Repeat</keyword>
<keyword id="KW-0809">Transit peptide</keyword>
<feature type="transit peptide" description="Mitochondrion" evidence="1">
    <location>
        <begin position="1"/>
        <end position="98"/>
    </location>
</feature>
<feature type="chain" id="PRO_0000363519" description="Pentatricopeptide repeat-containing protein At5g14820, mitochondrial">
    <location>
        <begin position="99"/>
        <end position="598"/>
    </location>
</feature>
<feature type="repeat" description="PPR 1">
    <location>
        <begin position="193"/>
        <end position="227"/>
    </location>
</feature>
<feature type="repeat" description="PPR 2">
    <location>
        <begin position="229"/>
        <end position="261"/>
    </location>
</feature>
<feature type="repeat" description="PPR 3">
    <location>
        <begin position="262"/>
        <end position="292"/>
    </location>
</feature>
<feature type="repeat" description="PPR 4">
    <location>
        <begin position="296"/>
        <end position="330"/>
    </location>
</feature>
<feature type="repeat" description="PPR 5">
    <location>
        <begin position="331"/>
        <end position="365"/>
    </location>
</feature>
<feature type="repeat" description="PPR 6">
    <location>
        <begin position="366"/>
        <end position="400"/>
    </location>
</feature>
<feature type="repeat" description="PPR 7">
    <location>
        <begin position="401"/>
        <end position="435"/>
    </location>
</feature>
<feature type="repeat" description="PPR 8">
    <location>
        <begin position="436"/>
        <end position="470"/>
    </location>
</feature>
<feature type="repeat" description="PPR 9">
    <location>
        <begin position="471"/>
        <end position="505"/>
    </location>
</feature>
<feature type="repeat" description="PPR 10">
    <location>
        <begin position="506"/>
        <end position="540"/>
    </location>
</feature>
<gene>
    <name type="ordered locus">At5g14820</name>
    <name type="ORF">T9L3_120</name>
</gene>
<sequence length="598" mass="68464">MAAAPWLYLSRRRSSTQTSLRRFLICSSSFDADEFISSQSRVIGGRGEEEVRFSGALFSRMIHSSTYHPYRQIPLPHSVQLLDASLGCRGFSSGSSNVSDGCDEEVESECDNDEETGVSCVESSTNPEEVERVCKVIDELFALDRNMEAVLDEMKLDLSHDLIVEVLERFRHARKPAFRFFCWAAERQGFAHDSRTYNSMMSILAKTRQFETMVSVLEEMGTKGLLTMETFTIAMKAFAAAKERKKAVGIFELMKKYKFKIGVETINCLLDSLGRAKLGKEAQVLFDKLKERFTPNMMTYTVLLNGWCRVRNLIEAARIWNDMIDHGLKPDIVAHNVMLEGLLRSMKKSDAIKLFHVMKSKGPCPNVRSYTIMIRDFCKQSSMETAIEYFDDMVDSGLQPDAAVYTCLITGFGTQKKLDTVYELLKEMQEKGHPPDGKTYNALIKLMANQKMPEHGTRIYNKMIQNEIEPSIHTFNMIMKSYFVARNYEMGRAVWDEMIKKGICPDDNSYTVLIRGLISEGKSREACRYLEEMLDKGMKTPLIDYNKFAADFHRGGQPEIFEELAQRAKFSGKFAAAEIFARWAQMTRRRCKQRFMED</sequence>